<gene>
    <name evidence="1" type="primary">dinB</name>
    <name type="ordered locus">SSON_0274</name>
</gene>
<comment type="function">
    <text evidence="1">Poorly processive, error-prone DNA polymerase involved in untargeted mutagenesis. Copies undamaged DNA at stalled replication forks, which arise in vivo from mismatched or misaligned primer ends. These misaligned primers can be extended by PolIV. Exhibits no 3'-5' exonuclease (proofreading) activity. May be involved in translesional synthesis, in conjunction with the beta clamp from PolIII.</text>
</comment>
<comment type="catalytic activity">
    <reaction evidence="1">
        <text>DNA(n) + a 2'-deoxyribonucleoside 5'-triphosphate = DNA(n+1) + diphosphate</text>
        <dbReference type="Rhea" id="RHEA:22508"/>
        <dbReference type="Rhea" id="RHEA-COMP:17339"/>
        <dbReference type="Rhea" id="RHEA-COMP:17340"/>
        <dbReference type="ChEBI" id="CHEBI:33019"/>
        <dbReference type="ChEBI" id="CHEBI:61560"/>
        <dbReference type="ChEBI" id="CHEBI:173112"/>
        <dbReference type="EC" id="2.7.7.7"/>
    </reaction>
</comment>
<comment type="cofactor">
    <cofactor evidence="1">
        <name>Mg(2+)</name>
        <dbReference type="ChEBI" id="CHEBI:18420"/>
    </cofactor>
    <text evidence="1">Binds 2 magnesium ions per subunit.</text>
</comment>
<comment type="subunit">
    <text evidence="1">Monomer.</text>
</comment>
<comment type="subcellular location">
    <subcellularLocation>
        <location evidence="1">Cytoplasm</location>
    </subcellularLocation>
</comment>
<comment type="similarity">
    <text evidence="1">Belongs to the DNA polymerase type-Y family.</text>
</comment>
<protein>
    <recommendedName>
        <fullName evidence="1">DNA polymerase IV</fullName>
        <shortName evidence="1">Pol IV</shortName>
        <ecNumber evidence="1">2.7.7.7</ecNumber>
    </recommendedName>
</protein>
<name>DPO4_SHISS</name>
<feature type="chain" id="PRO_1000084942" description="DNA polymerase IV">
    <location>
        <begin position="1"/>
        <end position="351"/>
    </location>
</feature>
<feature type="domain" description="UmuC" evidence="1">
    <location>
        <begin position="4"/>
        <end position="185"/>
    </location>
</feature>
<feature type="active site" evidence="1">
    <location>
        <position position="104"/>
    </location>
</feature>
<feature type="binding site" evidence="1">
    <location>
        <position position="8"/>
    </location>
    <ligand>
        <name>Mg(2+)</name>
        <dbReference type="ChEBI" id="CHEBI:18420"/>
    </ligand>
</feature>
<feature type="binding site" evidence="1">
    <location>
        <position position="103"/>
    </location>
    <ligand>
        <name>Mg(2+)</name>
        <dbReference type="ChEBI" id="CHEBI:18420"/>
    </ligand>
</feature>
<feature type="site" description="Substrate discrimination" evidence="1">
    <location>
        <position position="13"/>
    </location>
</feature>
<sequence length="351" mass="39516">MRKIIHVDMDCFFAAVEMRDNPALRDIPIAIGGSRERRGVISTANYPARKFGVRSAMPTGMALKLCPHLTLLPGRFDAYKEASNHIREIFSRYTSRIEPLSLDEAYLDVTDSVHCHGSATLIAQEIRQTIFNELQLTASAGVAPVKFLAKIASDMNKPNGQFVITPAEVPAFLQTLPLAKIPGVGKVSAAKLEAMGLRTCGDVQKCDLVMLLKRFGKFGRILWERSQGIDERDVNSERLRKSVGVERTMAEDIHHWSECEAIIERLYPELERRLAKVKPDLLIARQGVKLKFDDFQQTTQEHVWPRLNKADLIATARKTWDERRGGRGVRLVGLHVTLLDPQMERQLVLGL</sequence>
<reference key="1">
    <citation type="journal article" date="2005" name="Nucleic Acids Res.">
        <title>Genome dynamics and diversity of Shigella species, the etiologic agents of bacillary dysentery.</title>
        <authorList>
            <person name="Yang F."/>
            <person name="Yang J."/>
            <person name="Zhang X."/>
            <person name="Chen L."/>
            <person name="Jiang Y."/>
            <person name="Yan Y."/>
            <person name="Tang X."/>
            <person name="Wang J."/>
            <person name="Xiong Z."/>
            <person name="Dong J."/>
            <person name="Xue Y."/>
            <person name="Zhu Y."/>
            <person name="Xu X."/>
            <person name="Sun L."/>
            <person name="Chen S."/>
            <person name="Nie H."/>
            <person name="Peng J."/>
            <person name="Xu J."/>
            <person name="Wang Y."/>
            <person name="Yuan Z."/>
            <person name="Wen Y."/>
            <person name="Yao Z."/>
            <person name="Shen Y."/>
            <person name="Qiang B."/>
            <person name="Hou Y."/>
            <person name="Yu J."/>
            <person name="Jin Q."/>
        </authorList>
    </citation>
    <scope>NUCLEOTIDE SEQUENCE [LARGE SCALE GENOMIC DNA]</scope>
    <source>
        <strain>Ss046</strain>
    </source>
</reference>
<dbReference type="EC" id="2.7.7.7" evidence="1"/>
<dbReference type="EMBL" id="CP000038">
    <property type="protein sequence ID" value="AAZ87058.1"/>
    <property type="molecule type" value="Genomic_DNA"/>
</dbReference>
<dbReference type="RefSeq" id="WP_001226164.1">
    <property type="nucleotide sequence ID" value="NC_007384.1"/>
</dbReference>
<dbReference type="SMR" id="Q3Z5A4"/>
<dbReference type="GeneID" id="93777162"/>
<dbReference type="KEGG" id="ssn:SSON_0274"/>
<dbReference type="HOGENOM" id="CLU_012348_1_2_6"/>
<dbReference type="Proteomes" id="UP000002529">
    <property type="component" value="Chromosome"/>
</dbReference>
<dbReference type="GO" id="GO:0005829">
    <property type="term" value="C:cytosol"/>
    <property type="evidence" value="ECO:0007669"/>
    <property type="project" value="TreeGrafter"/>
</dbReference>
<dbReference type="GO" id="GO:0003684">
    <property type="term" value="F:damaged DNA binding"/>
    <property type="evidence" value="ECO:0007669"/>
    <property type="project" value="InterPro"/>
</dbReference>
<dbReference type="GO" id="GO:0003887">
    <property type="term" value="F:DNA-directed DNA polymerase activity"/>
    <property type="evidence" value="ECO:0007669"/>
    <property type="project" value="UniProtKB-UniRule"/>
</dbReference>
<dbReference type="GO" id="GO:0000287">
    <property type="term" value="F:magnesium ion binding"/>
    <property type="evidence" value="ECO:0007669"/>
    <property type="project" value="UniProtKB-UniRule"/>
</dbReference>
<dbReference type="GO" id="GO:0006261">
    <property type="term" value="P:DNA-templated DNA replication"/>
    <property type="evidence" value="ECO:0007669"/>
    <property type="project" value="UniProtKB-UniRule"/>
</dbReference>
<dbReference type="GO" id="GO:0042276">
    <property type="term" value="P:error-prone translesion synthesis"/>
    <property type="evidence" value="ECO:0007669"/>
    <property type="project" value="TreeGrafter"/>
</dbReference>
<dbReference type="GO" id="GO:0009432">
    <property type="term" value="P:SOS response"/>
    <property type="evidence" value="ECO:0007669"/>
    <property type="project" value="TreeGrafter"/>
</dbReference>
<dbReference type="CDD" id="cd03586">
    <property type="entry name" value="PolY_Pol_IV_kappa"/>
    <property type="match status" value="1"/>
</dbReference>
<dbReference type="FunFam" id="1.10.150.20:FF:000019">
    <property type="entry name" value="DNA polymerase IV"/>
    <property type="match status" value="1"/>
</dbReference>
<dbReference type="FunFam" id="3.30.1490.100:FF:000002">
    <property type="entry name" value="DNA polymerase IV"/>
    <property type="match status" value="1"/>
</dbReference>
<dbReference type="FunFam" id="3.30.70.270:FF:000002">
    <property type="entry name" value="DNA polymerase IV"/>
    <property type="match status" value="1"/>
</dbReference>
<dbReference type="FunFam" id="3.40.1170.60:FF:000001">
    <property type="entry name" value="DNA polymerase IV"/>
    <property type="match status" value="1"/>
</dbReference>
<dbReference type="Gene3D" id="3.30.70.270">
    <property type="match status" value="1"/>
</dbReference>
<dbReference type="Gene3D" id="3.40.1170.60">
    <property type="match status" value="1"/>
</dbReference>
<dbReference type="Gene3D" id="1.10.150.20">
    <property type="entry name" value="5' to 3' exonuclease, C-terminal subdomain"/>
    <property type="match status" value="1"/>
</dbReference>
<dbReference type="Gene3D" id="3.30.1490.100">
    <property type="entry name" value="DNA polymerase, Y-family, little finger domain"/>
    <property type="match status" value="1"/>
</dbReference>
<dbReference type="HAMAP" id="MF_01113">
    <property type="entry name" value="DNApol_IV"/>
    <property type="match status" value="1"/>
</dbReference>
<dbReference type="InterPro" id="IPR043502">
    <property type="entry name" value="DNA/RNA_pol_sf"/>
</dbReference>
<dbReference type="InterPro" id="IPR036775">
    <property type="entry name" value="DNA_pol_Y-fam_lit_finger_sf"/>
</dbReference>
<dbReference type="InterPro" id="IPR017961">
    <property type="entry name" value="DNA_pol_Y-fam_little_finger"/>
</dbReference>
<dbReference type="InterPro" id="IPR050116">
    <property type="entry name" value="DNA_polymerase-Y"/>
</dbReference>
<dbReference type="InterPro" id="IPR022880">
    <property type="entry name" value="DNApol_IV"/>
</dbReference>
<dbReference type="InterPro" id="IPR053848">
    <property type="entry name" value="IMS_HHH_1"/>
</dbReference>
<dbReference type="InterPro" id="IPR043128">
    <property type="entry name" value="Rev_trsase/Diguanyl_cyclase"/>
</dbReference>
<dbReference type="InterPro" id="IPR001126">
    <property type="entry name" value="UmuC"/>
</dbReference>
<dbReference type="NCBIfam" id="NF002677">
    <property type="entry name" value="PRK02406.1"/>
    <property type="match status" value="1"/>
</dbReference>
<dbReference type="PANTHER" id="PTHR11076:SF33">
    <property type="entry name" value="DNA POLYMERASE KAPPA"/>
    <property type="match status" value="1"/>
</dbReference>
<dbReference type="PANTHER" id="PTHR11076">
    <property type="entry name" value="DNA REPAIR POLYMERASE UMUC / TRANSFERASE FAMILY MEMBER"/>
    <property type="match status" value="1"/>
</dbReference>
<dbReference type="Pfam" id="PF00817">
    <property type="entry name" value="IMS"/>
    <property type="match status" value="1"/>
</dbReference>
<dbReference type="Pfam" id="PF11799">
    <property type="entry name" value="IMS_C"/>
    <property type="match status" value="1"/>
</dbReference>
<dbReference type="Pfam" id="PF21999">
    <property type="entry name" value="IMS_HHH_1"/>
    <property type="match status" value="1"/>
</dbReference>
<dbReference type="SUPFAM" id="SSF56672">
    <property type="entry name" value="DNA/RNA polymerases"/>
    <property type="match status" value="1"/>
</dbReference>
<dbReference type="SUPFAM" id="SSF100879">
    <property type="entry name" value="Lesion bypass DNA polymerase (Y-family), little finger domain"/>
    <property type="match status" value="1"/>
</dbReference>
<dbReference type="PROSITE" id="PS50173">
    <property type="entry name" value="UMUC"/>
    <property type="match status" value="1"/>
</dbReference>
<evidence type="ECO:0000255" key="1">
    <source>
        <dbReference type="HAMAP-Rule" id="MF_01113"/>
    </source>
</evidence>
<accession>Q3Z5A4</accession>
<proteinExistence type="inferred from homology"/>
<organism>
    <name type="scientific">Shigella sonnei (strain Ss046)</name>
    <dbReference type="NCBI Taxonomy" id="300269"/>
    <lineage>
        <taxon>Bacteria</taxon>
        <taxon>Pseudomonadati</taxon>
        <taxon>Pseudomonadota</taxon>
        <taxon>Gammaproteobacteria</taxon>
        <taxon>Enterobacterales</taxon>
        <taxon>Enterobacteriaceae</taxon>
        <taxon>Shigella</taxon>
    </lineage>
</organism>
<keyword id="KW-0963">Cytoplasm</keyword>
<keyword id="KW-0227">DNA damage</keyword>
<keyword id="KW-0234">DNA repair</keyword>
<keyword id="KW-0235">DNA replication</keyword>
<keyword id="KW-0238">DNA-binding</keyword>
<keyword id="KW-0239">DNA-directed DNA polymerase</keyword>
<keyword id="KW-0460">Magnesium</keyword>
<keyword id="KW-0479">Metal-binding</keyword>
<keyword id="KW-0515">Mutator protein</keyword>
<keyword id="KW-0548">Nucleotidyltransferase</keyword>
<keyword id="KW-1185">Reference proteome</keyword>
<keyword id="KW-0808">Transferase</keyword>